<proteinExistence type="evidence at transcript level"/>
<name>CRIS1_MOUSE</name>
<feature type="signal peptide">
    <location>
        <begin position="1"/>
        <end position="19"/>
    </location>
</feature>
<feature type="chain" id="PRO_0000006262" description="Cysteine-rich secretory protein 1">
    <location>
        <begin position="20"/>
        <end position="244"/>
    </location>
</feature>
<feature type="domain" description="SCP">
    <location>
        <begin position="44"/>
        <end position="170"/>
    </location>
</feature>
<feature type="domain" description="ShKT" evidence="2">
    <location>
        <begin position="206"/>
        <end position="239"/>
    </location>
</feature>
<feature type="glycosylation site" description="N-linked (GlcNAc...) asparagine" evidence="1">
    <location>
        <position position="145"/>
    </location>
</feature>
<feature type="disulfide bond" evidence="2">
    <location>
        <begin position="190"/>
        <end position="197"/>
    </location>
</feature>
<feature type="disulfide bond" evidence="2">
    <location>
        <begin position="193"/>
        <end position="202"/>
    </location>
</feature>
<feature type="disulfide bond" evidence="2">
    <location>
        <begin position="206"/>
        <end position="239"/>
    </location>
</feature>
<feature type="disulfide bond" evidence="2">
    <location>
        <begin position="215"/>
        <end position="233"/>
    </location>
</feature>
<feature type="disulfide bond" evidence="2">
    <location>
        <begin position="224"/>
        <end position="237"/>
    </location>
</feature>
<accession>Q03401</accession>
<gene>
    <name type="primary">Crisp1</name>
    <name type="synonym">Aeg-1</name>
    <name type="synonym">Aeg1</name>
</gene>
<protein>
    <recommendedName>
        <fullName>Cysteine-rich secretory protein 1</fullName>
        <shortName>CRISP-1</shortName>
    </recommendedName>
    <alternativeName>
        <fullName>Acidic epididymal glycoprotein 1</fullName>
    </alternativeName>
    <alternativeName>
        <fullName>Sperm-coating glycoprotein 1</fullName>
        <shortName>SCP 1</shortName>
    </alternativeName>
</protein>
<dbReference type="EMBL" id="M92849">
    <property type="protein sequence ID" value="AAA37185.1"/>
    <property type="molecule type" value="mRNA"/>
</dbReference>
<dbReference type="EMBL" id="L05559">
    <property type="protein sequence ID" value="AAA37460.1"/>
    <property type="molecule type" value="mRNA"/>
</dbReference>
<dbReference type="CCDS" id="CCDS28784.1"/>
<dbReference type="PIR" id="A49202">
    <property type="entry name" value="A49202"/>
</dbReference>
<dbReference type="RefSeq" id="NP_033768.3">
    <property type="nucleotide sequence ID" value="NM_009638.3"/>
</dbReference>
<dbReference type="SMR" id="Q03401"/>
<dbReference type="FunCoup" id="Q03401">
    <property type="interactions" value="4"/>
</dbReference>
<dbReference type="STRING" id="10090.ENSMUSP00000026498"/>
<dbReference type="GlyCosmos" id="Q03401">
    <property type="glycosylation" value="1 site, No reported glycans"/>
</dbReference>
<dbReference type="GlyGen" id="Q03401">
    <property type="glycosylation" value="1 site"/>
</dbReference>
<dbReference type="iPTMnet" id="Q03401"/>
<dbReference type="PhosphoSitePlus" id="Q03401"/>
<dbReference type="PaxDb" id="10090-ENSMUSP00000026498"/>
<dbReference type="PeptideAtlas" id="Q03401"/>
<dbReference type="ProteomicsDB" id="284171"/>
<dbReference type="DNASU" id="11571"/>
<dbReference type="Ensembl" id="ENSMUST00000026498.5">
    <property type="protein sequence ID" value="ENSMUSP00000026498.5"/>
    <property type="gene ID" value="ENSMUSG00000025431.5"/>
</dbReference>
<dbReference type="GeneID" id="11571"/>
<dbReference type="KEGG" id="mmu:11571"/>
<dbReference type="UCSC" id="uc008coh.2">
    <property type="organism name" value="mouse"/>
</dbReference>
<dbReference type="AGR" id="MGI:102553"/>
<dbReference type="CTD" id="167"/>
<dbReference type="MGI" id="MGI:102553">
    <property type="gene designation" value="Crisp1"/>
</dbReference>
<dbReference type="VEuPathDB" id="HostDB:ENSMUSG00000025431"/>
<dbReference type="eggNOG" id="KOG3017">
    <property type="taxonomic scope" value="Eukaryota"/>
</dbReference>
<dbReference type="GeneTree" id="ENSGT00940000162013"/>
<dbReference type="HOGENOM" id="CLU_035730_2_1_1"/>
<dbReference type="InParanoid" id="Q03401"/>
<dbReference type="OMA" id="LYMSSFQ"/>
<dbReference type="OrthoDB" id="737510at2759"/>
<dbReference type="PhylomeDB" id="Q03401"/>
<dbReference type="TreeFam" id="TF316148"/>
<dbReference type="BioGRID-ORCS" id="11571">
    <property type="hits" value="0 hits in 77 CRISPR screens"/>
</dbReference>
<dbReference type="ChiTaRS" id="Crisp1">
    <property type="organism name" value="mouse"/>
</dbReference>
<dbReference type="PRO" id="PR:Q03401"/>
<dbReference type="Proteomes" id="UP000000589">
    <property type="component" value="Chromosome 17"/>
</dbReference>
<dbReference type="RNAct" id="Q03401">
    <property type="molecule type" value="protein"/>
</dbReference>
<dbReference type="Bgee" id="ENSMUSG00000025431">
    <property type="expression patterns" value="Expressed in parotid gland and 45 other cell types or tissues"/>
</dbReference>
<dbReference type="ExpressionAtlas" id="Q03401">
    <property type="expression patterns" value="baseline and differential"/>
</dbReference>
<dbReference type="GO" id="GO:0005576">
    <property type="term" value="C:extracellular region"/>
    <property type="evidence" value="ECO:0000250"/>
    <property type="project" value="MGI"/>
</dbReference>
<dbReference type="GO" id="GO:0030133">
    <property type="term" value="C:transport vesicle"/>
    <property type="evidence" value="ECO:0007669"/>
    <property type="project" value="UniProtKB-SubCell"/>
</dbReference>
<dbReference type="CDD" id="cd05383">
    <property type="entry name" value="CAP_CRISP"/>
    <property type="match status" value="1"/>
</dbReference>
<dbReference type="FunFam" id="1.10.10.740:FF:000001">
    <property type="entry name" value="Cysteine-rich secretory protein 2"/>
    <property type="match status" value="1"/>
</dbReference>
<dbReference type="FunFam" id="3.40.33.10:FF:000005">
    <property type="entry name" value="Cysteine-rich secretory protein 2"/>
    <property type="match status" value="1"/>
</dbReference>
<dbReference type="Gene3D" id="3.40.33.10">
    <property type="entry name" value="CAP"/>
    <property type="match status" value="1"/>
</dbReference>
<dbReference type="Gene3D" id="1.10.10.740">
    <property type="entry name" value="Crisp domain"/>
    <property type="match status" value="1"/>
</dbReference>
<dbReference type="InterPro" id="IPR018244">
    <property type="entry name" value="Allrgn_V5/Tpx1_CS"/>
</dbReference>
<dbReference type="InterPro" id="IPR014044">
    <property type="entry name" value="CAP_dom"/>
</dbReference>
<dbReference type="InterPro" id="IPR035940">
    <property type="entry name" value="CAP_sf"/>
</dbReference>
<dbReference type="InterPro" id="IPR042076">
    <property type="entry name" value="Crisp-like_dom"/>
</dbReference>
<dbReference type="InterPro" id="IPR001283">
    <property type="entry name" value="CRISP-related"/>
</dbReference>
<dbReference type="InterPro" id="IPR013871">
    <property type="entry name" value="Cysteine_rich_secretory"/>
</dbReference>
<dbReference type="InterPro" id="IPR034117">
    <property type="entry name" value="SCP_CRISP"/>
</dbReference>
<dbReference type="InterPro" id="IPR003582">
    <property type="entry name" value="ShKT_dom"/>
</dbReference>
<dbReference type="PANTHER" id="PTHR10334">
    <property type="entry name" value="CYSTEINE-RICH SECRETORY PROTEIN-RELATED"/>
    <property type="match status" value="1"/>
</dbReference>
<dbReference type="Pfam" id="PF00188">
    <property type="entry name" value="CAP"/>
    <property type="match status" value="1"/>
</dbReference>
<dbReference type="Pfam" id="PF08562">
    <property type="entry name" value="Crisp"/>
    <property type="match status" value="1"/>
</dbReference>
<dbReference type="PRINTS" id="PR00837">
    <property type="entry name" value="V5TPXLIKE"/>
</dbReference>
<dbReference type="SMART" id="SM00198">
    <property type="entry name" value="SCP"/>
    <property type="match status" value="1"/>
</dbReference>
<dbReference type="SUPFAM" id="SSF57546">
    <property type="entry name" value="Crisp domain-like"/>
    <property type="match status" value="1"/>
</dbReference>
<dbReference type="SUPFAM" id="SSF55797">
    <property type="entry name" value="PR-1-like"/>
    <property type="match status" value="1"/>
</dbReference>
<dbReference type="PROSITE" id="PS01009">
    <property type="entry name" value="CRISP_1"/>
    <property type="match status" value="1"/>
</dbReference>
<dbReference type="PROSITE" id="PS01010">
    <property type="entry name" value="CRISP_2"/>
    <property type="match status" value="1"/>
</dbReference>
<dbReference type="PROSITE" id="PS51670">
    <property type="entry name" value="SHKT"/>
    <property type="match status" value="1"/>
</dbReference>
<evidence type="ECO:0000255" key="1"/>
<evidence type="ECO:0000255" key="2">
    <source>
        <dbReference type="PROSITE-ProRule" id="PRU01005"/>
    </source>
</evidence>
<evidence type="ECO:0000305" key="3"/>
<sequence>MALMLVLFFLAAVLPPSLLQDSSQENRLEKLSTTKMSVQEEIVSKHNQLRRMVSPSGSDLLKMEWNYDAQVNAQQWADKCTFSHSPIELRTTNLRCGENLFMSSYLASWSSAIQGWYNEYKDLTYDVGPKQPDSVVGHYTQVVWNSTFQVACGVAECPKNPLRYYYVCHYCPVGNYQGRLYTPYTAGEPCASCPDHCEDGLCTNSCGHEDKYTNCKYLKKMLSCEHELLKKGCKATCLCEGKIH</sequence>
<reference key="1">
    <citation type="journal article" date="1992" name="Mol. Cell. Endocrinol.">
        <title>Mouse submandibular glands express an androgen-regulated transcript encoding an acidic epididymal glycoprotein-like molecule.</title>
        <authorList>
            <person name="Mizuki N."/>
            <person name="Kasahara M."/>
        </authorList>
    </citation>
    <scope>NUCLEOTIDE SEQUENCE [MRNA]</scope>
    <source>
        <tissue>Submandibular gland</tissue>
    </source>
</reference>
<reference key="2">
    <citation type="journal article" date="1993" name="Endocrinology">
        <title>Transcripts for cysteine-rich secretory protein-1 (CRISP-1; DE/AEG) and the novel related CRISP-3 are expressed under androgen control in the mouse salivary gland.</title>
        <authorList>
            <person name="Haendler B."/>
            <person name="Kraetzschmar J."/>
            <person name="Theuring F."/>
            <person name="Schleuning W.-D."/>
        </authorList>
    </citation>
    <scope>NUCLEOTIDE SEQUENCE [MRNA]</scope>
    <source>
        <tissue>Submandibular gland</tissue>
    </source>
</reference>
<keyword id="KW-0968">Cytoplasmic vesicle</keyword>
<keyword id="KW-1015">Disulfide bond</keyword>
<keyword id="KW-0325">Glycoprotein</keyword>
<keyword id="KW-1185">Reference proteome</keyword>
<keyword id="KW-0732">Signal</keyword>
<comment type="function">
    <text>This protein is supposed to help spermatozoa undergo functional maturation while they move from the testis to the ductus deferens.</text>
</comment>
<comment type="subcellular location">
    <subcellularLocation>
        <location>Cytoplasmic vesicle</location>
        <location>Secretory vesicle</location>
    </subcellularLocation>
    <text>Stored in secretory granules of granular convoluted tubules cells.</text>
</comment>
<comment type="tissue specificity">
    <text>Mainly found in the cauda epididymis where it is synthesized by the principal cells and secreted into the lumen. Binds to the heads of spermatozoa. Also expressed in the submandibular gland.</text>
</comment>
<comment type="developmental stage">
    <text>Exponential increase between days 25 and 30 after birth.</text>
</comment>
<comment type="induction">
    <text>By androgens.</text>
</comment>
<comment type="similarity">
    <text evidence="3">Belongs to the CRISP family.</text>
</comment>
<organism>
    <name type="scientific">Mus musculus</name>
    <name type="common">Mouse</name>
    <dbReference type="NCBI Taxonomy" id="10090"/>
    <lineage>
        <taxon>Eukaryota</taxon>
        <taxon>Metazoa</taxon>
        <taxon>Chordata</taxon>
        <taxon>Craniata</taxon>
        <taxon>Vertebrata</taxon>
        <taxon>Euteleostomi</taxon>
        <taxon>Mammalia</taxon>
        <taxon>Eutheria</taxon>
        <taxon>Euarchontoglires</taxon>
        <taxon>Glires</taxon>
        <taxon>Rodentia</taxon>
        <taxon>Myomorpha</taxon>
        <taxon>Muroidea</taxon>
        <taxon>Muridae</taxon>
        <taxon>Murinae</taxon>
        <taxon>Mus</taxon>
        <taxon>Mus</taxon>
    </lineage>
</organism>